<name>A1O_LOXAM</name>
<dbReference type="EC" id="4.6.1.-" evidence="4"/>
<dbReference type="EMBL" id="FJ171434">
    <property type="protein sequence ID" value="ACN48930.1"/>
    <property type="molecule type" value="mRNA"/>
</dbReference>
<dbReference type="SMR" id="C0JAZ9"/>
<dbReference type="ArachnoServer" id="AS001165">
    <property type="toxin name" value="SicTox-LamalphaICI (fragment)"/>
</dbReference>
<dbReference type="GO" id="GO:0005576">
    <property type="term" value="C:extracellular region"/>
    <property type="evidence" value="ECO:0007669"/>
    <property type="project" value="UniProtKB-SubCell"/>
</dbReference>
<dbReference type="GO" id="GO:0016829">
    <property type="term" value="F:lyase activity"/>
    <property type="evidence" value="ECO:0007669"/>
    <property type="project" value="UniProtKB-KW"/>
</dbReference>
<dbReference type="GO" id="GO:0046872">
    <property type="term" value="F:metal ion binding"/>
    <property type="evidence" value="ECO:0007669"/>
    <property type="project" value="UniProtKB-KW"/>
</dbReference>
<dbReference type="GO" id="GO:0008081">
    <property type="term" value="F:phosphoric diester hydrolase activity"/>
    <property type="evidence" value="ECO:0007669"/>
    <property type="project" value="InterPro"/>
</dbReference>
<dbReference type="GO" id="GO:0090729">
    <property type="term" value="F:toxin activity"/>
    <property type="evidence" value="ECO:0007669"/>
    <property type="project" value="UniProtKB-KW"/>
</dbReference>
<dbReference type="GO" id="GO:0031640">
    <property type="term" value="P:killing of cells of another organism"/>
    <property type="evidence" value="ECO:0007669"/>
    <property type="project" value="UniProtKB-KW"/>
</dbReference>
<dbReference type="GO" id="GO:0016042">
    <property type="term" value="P:lipid catabolic process"/>
    <property type="evidence" value="ECO:0007669"/>
    <property type="project" value="UniProtKB-KW"/>
</dbReference>
<dbReference type="CDD" id="cd08576">
    <property type="entry name" value="GDPD_like_SMaseD_PLD"/>
    <property type="match status" value="1"/>
</dbReference>
<dbReference type="Gene3D" id="3.20.20.190">
    <property type="entry name" value="Phosphatidylinositol (PI) phosphodiesterase"/>
    <property type="match status" value="1"/>
</dbReference>
<dbReference type="InterPro" id="IPR017946">
    <property type="entry name" value="PLC-like_Pdiesterase_TIM-brl"/>
</dbReference>
<dbReference type="Pfam" id="PF13653">
    <property type="entry name" value="GDPD_2"/>
    <property type="match status" value="1"/>
</dbReference>
<dbReference type="SUPFAM" id="SSF51695">
    <property type="entry name" value="PLC-like phosphodiesterases"/>
    <property type="match status" value="1"/>
</dbReference>
<keyword id="KW-0204">Cytolysis</keyword>
<keyword id="KW-1061">Dermonecrotic toxin</keyword>
<keyword id="KW-1015">Disulfide bond</keyword>
<keyword id="KW-0354">Hemolysis</keyword>
<keyword id="KW-0442">Lipid degradation</keyword>
<keyword id="KW-0443">Lipid metabolism</keyword>
<keyword id="KW-0456">Lyase</keyword>
<keyword id="KW-0460">Magnesium</keyword>
<keyword id="KW-0479">Metal-binding</keyword>
<keyword id="KW-0964">Secreted</keyword>
<keyword id="KW-0800">Toxin</keyword>
<protein>
    <recommendedName>
        <fullName evidence="6">Dermonecrotic toxin LamSicTox-alphaIC1</fullName>
        <ecNumber evidence="4">4.6.1.-</ecNumber>
    </recommendedName>
    <alternativeName>
        <fullName>Phospholipase D</fullName>
        <shortName>PLD</shortName>
    </alternativeName>
    <alternativeName>
        <fullName>Sphingomyelin phosphodiesterase D</fullName>
        <shortName>SMD</shortName>
        <shortName>SMase D</shortName>
        <shortName>Sphingomyelinase D</shortName>
    </alternativeName>
</protein>
<comment type="function">
    <text evidence="1 3">Dermonecrotic toxins cleave the phosphodiester linkage between the phosphate and headgroup of certain phospholipids (sphingolipid and lysolipid substrates), forming an alcohol (often choline) and a cyclic phosphate (By similarity). This toxin acts on sphingomyelin (SM) (By similarity). It may also act on ceramide phosphoethanolamine (CPE), lysophosphatidylcholine (LPC) and lysophosphatidylethanolamine (LPE), but not on lysophosphatidylserine (LPS), and lysophosphatidylglycerol (LPG) (By similarity). It acts by transphosphatidylation, releasing exclusively cyclic phosphate products as second products (By similarity). Induces dermonecrosis, hemolysis, increased vascular permeability, edema, inflammatory response, and platelet aggregation (By similarity).</text>
</comment>
<comment type="catalytic activity">
    <reaction evidence="1">
        <text>an N-(acyl)-sphingosylphosphocholine = an N-(acyl)-sphingosyl-1,3-cyclic phosphate + choline</text>
        <dbReference type="Rhea" id="RHEA:60652"/>
        <dbReference type="ChEBI" id="CHEBI:15354"/>
        <dbReference type="ChEBI" id="CHEBI:64583"/>
        <dbReference type="ChEBI" id="CHEBI:143892"/>
    </reaction>
</comment>
<comment type="catalytic activity">
    <reaction evidence="1">
        <text>an N-(acyl)-sphingosylphosphoethanolamine = an N-(acyl)-sphingosyl-1,3-cyclic phosphate + ethanolamine</text>
        <dbReference type="Rhea" id="RHEA:60648"/>
        <dbReference type="ChEBI" id="CHEBI:57603"/>
        <dbReference type="ChEBI" id="CHEBI:143891"/>
        <dbReference type="ChEBI" id="CHEBI:143892"/>
    </reaction>
</comment>
<comment type="catalytic activity">
    <reaction evidence="1">
        <text>a 1-acyl-sn-glycero-3-phosphocholine = a 1-acyl-sn-glycero-2,3-cyclic phosphate + choline</text>
        <dbReference type="Rhea" id="RHEA:60700"/>
        <dbReference type="ChEBI" id="CHEBI:15354"/>
        <dbReference type="ChEBI" id="CHEBI:58168"/>
        <dbReference type="ChEBI" id="CHEBI:143947"/>
    </reaction>
</comment>
<comment type="catalytic activity">
    <reaction evidence="1">
        <text>a 1-acyl-sn-glycero-3-phosphoethanolamine = a 1-acyl-sn-glycero-2,3-cyclic phosphate + ethanolamine</text>
        <dbReference type="Rhea" id="RHEA:60704"/>
        <dbReference type="ChEBI" id="CHEBI:57603"/>
        <dbReference type="ChEBI" id="CHEBI:64381"/>
        <dbReference type="ChEBI" id="CHEBI:143947"/>
    </reaction>
</comment>
<comment type="cofactor">
    <cofactor evidence="5">
        <name>Mg(2+)</name>
        <dbReference type="ChEBI" id="CHEBI:18420"/>
    </cofactor>
    <text evidence="5">Binds 1 Mg(2+) ion per subunit.</text>
</comment>
<comment type="subcellular location">
    <subcellularLocation>
        <location evidence="8">Secreted</location>
    </subcellularLocation>
</comment>
<comment type="tissue specificity">
    <text evidence="8">Expressed by the venom gland.</text>
</comment>
<comment type="similarity">
    <text evidence="7">Belongs to the arthropod phospholipase D family. Class II subfamily.</text>
</comment>
<comment type="caution">
    <text evidence="1 2 4">The most common activity assay for dermonecrotic toxins detects enzymatic activity by monitoring choline release from substrate. Liberation of choline from sphingomyelin (SM) or lysophosphatidylcholine (LPC) is commonly assumed to result from substrate hydrolysis, giving either ceramide-1-phosphate (C1P) or lysophosphatidic acid (LPA), respectively, as a second product. However, two studies from Lajoie and colleagues (2013 and 2015) report the observation of exclusive formation of cyclic phosphate products as second products, resulting from intramolecular transphosphatidylation. Cyclic phosphates have vastly different biological properties from their monoester counterparts, and they may be relevant to the pathology of brown spider envenomation.</text>
</comment>
<evidence type="ECO:0000250" key="1">
    <source>
        <dbReference type="UniProtKB" id="A0A0D4WTV1"/>
    </source>
</evidence>
<evidence type="ECO:0000250" key="2">
    <source>
        <dbReference type="UniProtKB" id="A0A0D4WV12"/>
    </source>
</evidence>
<evidence type="ECO:0000250" key="3">
    <source>
        <dbReference type="UniProtKB" id="P0CE80"/>
    </source>
</evidence>
<evidence type="ECO:0000250" key="4">
    <source>
        <dbReference type="UniProtKB" id="Q4ZFU2"/>
    </source>
</evidence>
<evidence type="ECO:0000250" key="5">
    <source>
        <dbReference type="UniProtKB" id="Q8I914"/>
    </source>
</evidence>
<evidence type="ECO:0000303" key="6">
    <source>
    </source>
</evidence>
<evidence type="ECO:0000305" key="7"/>
<evidence type="ECO:0000305" key="8">
    <source>
    </source>
</evidence>
<accession>C0JAZ9</accession>
<sequence>WIMGHMVNNINQIEEFVSLGANSIETDVSFDKKANPEYTYHGTPCDCGRDCLRWEYFKDFLNGLRKATTPGDAKYREKLILVVFDLKTGSLYDNQAYDAGKSLAKNLLEYYWNNGNNGGRAYIVLSIPNLAHYKLVTGFKETLKDEGHEDLLEKVGHDFSGNDDIPDIESAYKKAGVTGHVWQSDGITNCLPRTLKRVILAIANRDSGSGIINKVYYWTVDKRSTTRDSLEAGVDGIMTNYPDVIADVLSEAAYKDKYRIATYDDNPWETFKA</sequence>
<reference key="1">
    <citation type="journal article" date="2009" name="Mol. Biol. Evol.">
        <title>Molecular evolution, functional variation, and proposed nomenclature of the gene family that includes sphingomyelinase D in sicariid spider venoms.</title>
        <authorList>
            <person name="Binford G.J."/>
            <person name="Bodner M.R."/>
            <person name="Cordes M.H."/>
            <person name="Baldwin K.L."/>
            <person name="Rynerson M.R."/>
            <person name="Burns S.N."/>
            <person name="Zobel-Thropp P.A."/>
        </authorList>
    </citation>
    <scope>NUCLEOTIDE SEQUENCE [MRNA]</scope>
    <scope>NOMENCLATURE</scope>
    <source>
        <tissue>Venom gland</tissue>
    </source>
</reference>
<organism>
    <name type="scientific">Loxosceles amazonica</name>
    <name type="common">Recluse spider</name>
    <dbReference type="NCBI Taxonomy" id="571517"/>
    <lineage>
        <taxon>Eukaryota</taxon>
        <taxon>Metazoa</taxon>
        <taxon>Ecdysozoa</taxon>
        <taxon>Arthropoda</taxon>
        <taxon>Chelicerata</taxon>
        <taxon>Arachnida</taxon>
        <taxon>Araneae</taxon>
        <taxon>Araneomorphae</taxon>
        <taxon>Haplogynae</taxon>
        <taxon>Scytodoidea</taxon>
        <taxon>Sicariidae</taxon>
        <taxon>Loxosceles</taxon>
    </lineage>
</organism>
<feature type="chain" id="PRO_0000392818" description="Dermonecrotic toxin LamSicTox-alphaIC1">
    <location>
        <begin position="1" status="less than"/>
        <end position="273"/>
    </location>
</feature>
<feature type="active site" evidence="5">
    <location>
        <position position="5"/>
    </location>
</feature>
<feature type="active site" description="Nucleophile" evidence="5">
    <location>
        <position position="41"/>
    </location>
</feature>
<feature type="binding site" evidence="5">
    <location>
        <position position="25"/>
    </location>
    <ligand>
        <name>Mg(2+)</name>
        <dbReference type="ChEBI" id="CHEBI:18420"/>
    </ligand>
</feature>
<feature type="binding site" evidence="5">
    <location>
        <position position="27"/>
    </location>
    <ligand>
        <name>Mg(2+)</name>
        <dbReference type="ChEBI" id="CHEBI:18420"/>
    </ligand>
</feature>
<feature type="binding site" evidence="5">
    <location>
        <position position="85"/>
    </location>
    <ligand>
        <name>Mg(2+)</name>
        <dbReference type="ChEBI" id="CHEBI:18420"/>
    </ligand>
</feature>
<feature type="disulfide bond" evidence="3">
    <location>
        <begin position="45"/>
        <end position="51"/>
    </location>
</feature>
<feature type="disulfide bond" evidence="3">
    <location>
        <begin position="47"/>
        <end position="190"/>
    </location>
</feature>
<feature type="non-terminal residue">
    <location>
        <position position="1"/>
    </location>
</feature>
<proteinExistence type="evidence at transcript level"/>